<sequence>MQPALNAFTEQPADTAEATSRAGLEQAFALFNQMSSQLSESYSLLEERVTELKGQLALVSAQRMEELAEKERLANRLQSLLDLLPGGVIVIDAHGVVREANPAALGLLGEPLVGMLWREVIARCFAPREDDGHEISLRDGRRLSIATRSLNGEPGQLILLNDLTDTRRLQEQLARHERLSALGRMVASLAHQIRTPLSAALLYAGHLSEQALPTDQQQRFAGRLKERLHELEHQVRDMLVFARGELPLTDRVAPKALFDSLRAAAEVHVQGLQVRWQCEARGGELLCNRDTLVGTVLNLVENAIQACGPELRLKVHLYARADSLRLSVSDNGPGMDPATLARLGEPFFTTKTTGTGLGLAVVKAVARAHQGQLQLRSRPGRGTCATLILPLIPAAPLSAIQE</sequence>
<accession>Q9I4N4</accession>
<keyword id="KW-0067">ATP-binding</keyword>
<keyword id="KW-0418">Kinase</keyword>
<keyword id="KW-0547">Nucleotide-binding</keyword>
<keyword id="KW-0597">Phosphoprotein</keyword>
<keyword id="KW-1185">Reference proteome</keyword>
<keyword id="KW-0808">Transferase</keyword>
<keyword id="KW-0902">Two-component regulatory system</keyword>
<dbReference type="EC" id="2.7.13.3" evidence="1"/>
<dbReference type="EMBL" id="AE004091">
    <property type="protein sequence ID" value="AAG04487.1"/>
    <property type="molecule type" value="Genomic_DNA"/>
</dbReference>
<dbReference type="PIR" id="C83508">
    <property type="entry name" value="C83508"/>
</dbReference>
<dbReference type="RefSeq" id="NP_249789.1">
    <property type="nucleotide sequence ID" value="NC_002516.2"/>
</dbReference>
<dbReference type="RefSeq" id="WP_003086450.1">
    <property type="nucleotide sequence ID" value="NZ_QZGE01000006.1"/>
</dbReference>
<dbReference type="SMR" id="Q9I4N4"/>
<dbReference type="STRING" id="208964.PA1098"/>
<dbReference type="PaxDb" id="208964-PA1098"/>
<dbReference type="GeneID" id="878201"/>
<dbReference type="KEGG" id="pae:PA1098"/>
<dbReference type="PATRIC" id="fig|208964.12.peg.1137"/>
<dbReference type="PseudoCAP" id="PA1098"/>
<dbReference type="HOGENOM" id="CLU_000445_114_39_6"/>
<dbReference type="InParanoid" id="Q9I4N4"/>
<dbReference type="OrthoDB" id="9776727at2"/>
<dbReference type="PhylomeDB" id="Q9I4N4"/>
<dbReference type="BioCyc" id="PAER208964:G1FZ6-1121-MONOMER"/>
<dbReference type="Proteomes" id="UP000002438">
    <property type="component" value="Chromosome"/>
</dbReference>
<dbReference type="GO" id="GO:0005524">
    <property type="term" value="F:ATP binding"/>
    <property type="evidence" value="ECO:0007669"/>
    <property type="project" value="UniProtKB-KW"/>
</dbReference>
<dbReference type="GO" id="GO:0000155">
    <property type="term" value="F:phosphorelay sensor kinase activity"/>
    <property type="evidence" value="ECO:0007669"/>
    <property type="project" value="InterPro"/>
</dbReference>
<dbReference type="GO" id="GO:0000160">
    <property type="term" value="P:phosphorelay signal transduction system"/>
    <property type="evidence" value="ECO:0000314"/>
    <property type="project" value="PseudoCAP"/>
</dbReference>
<dbReference type="CDD" id="cd00075">
    <property type="entry name" value="HATPase"/>
    <property type="match status" value="1"/>
</dbReference>
<dbReference type="CDD" id="cd00082">
    <property type="entry name" value="HisKA"/>
    <property type="match status" value="1"/>
</dbReference>
<dbReference type="CDD" id="cd00130">
    <property type="entry name" value="PAS"/>
    <property type="match status" value="1"/>
</dbReference>
<dbReference type="FunFam" id="1.10.287.130:FF:000059">
    <property type="entry name" value="PAS domain-containing sensor histidine kinase"/>
    <property type="match status" value="1"/>
</dbReference>
<dbReference type="FunFam" id="3.30.565.10:FF:000116">
    <property type="entry name" value="Sensor histidine kinase FleS"/>
    <property type="match status" value="1"/>
</dbReference>
<dbReference type="Gene3D" id="1.10.287.130">
    <property type="match status" value="1"/>
</dbReference>
<dbReference type="Gene3D" id="3.30.565.10">
    <property type="entry name" value="Histidine kinase-like ATPase, C-terminal domain"/>
    <property type="match status" value="1"/>
</dbReference>
<dbReference type="Gene3D" id="3.30.450.20">
    <property type="entry name" value="PAS domain"/>
    <property type="match status" value="1"/>
</dbReference>
<dbReference type="InterPro" id="IPR036890">
    <property type="entry name" value="HATPase_C_sf"/>
</dbReference>
<dbReference type="InterPro" id="IPR005467">
    <property type="entry name" value="His_kinase_dom"/>
</dbReference>
<dbReference type="InterPro" id="IPR003661">
    <property type="entry name" value="HisK_dim/P_dom"/>
</dbReference>
<dbReference type="InterPro" id="IPR036097">
    <property type="entry name" value="HisK_dim/P_sf"/>
</dbReference>
<dbReference type="InterPro" id="IPR000014">
    <property type="entry name" value="PAS"/>
</dbReference>
<dbReference type="InterPro" id="IPR035965">
    <property type="entry name" value="PAS-like_dom_sf"/>
</dbReference>
<dbReference type="InterPro" id="IPR004358">
    <property type="entry name" value="Sig_transdc_His_kin-like_C"/>
</dbReference>
<dbReference type="PANTHER" id="PTHR43065">
    <property type="entry name" value="SENSOR HISTIDINE KINASE"/>
    <property type="match status" value="1"/>
</dbReference>
<dbReference type="PANTHER" id="PTHR43065:SF29">
    <property type="entry name" value="SENSOR PROTEIN KINASE FLES"/>
    <property type="match status" value="1"/>
</dbReference>
<dbReference type="Pfam" id="PF02518">
    <property type="entry name" value="HATPase_c"/>
    <property type="match status" value="1"/>
</dbReference>
<dbReference type="Pfam" id="PF00512">
    <property type="entry name" value="HisKA"/>
    <property type="match status" value="1"/>
</dbReference>
<dbReference type="Pfam" id="PF13188">
    <property type="entry name" value="PAS_8"/>
    <property type="match status" value="1"/>
</dbReference>
<dbReference type="PRINTS" id="PR00344">
    <property type="entry name" value="BCTRLSENSOR"/>
</dbReference>
<dbReference type="SMART" id="SM00387">
    <property type="entry name" value="HATPase_c"/>
    <property type="match status" value="1"/>
</dbReference>
<dbReference type="SMART" id="SM00388">
    <property type="entry name" value="HisKA"/>
    <property type="match status" value="1"/>
</dbReference>
<dbReference type="SMART" id="SM00091">
    <property type="entry name" value="PAS"/>
    <property type="match status" value="1"/>
</dbReference>
<dbReference type="SUPFAM" id="SSF55874">
    <property type="entry name" value="ATPase domain of HSP90 chaperone/DNA topoisomerase II/histidine kinase"/>
    <property type="match status" value="1"/>
</dbReference>
<dbReference type="SUPFAM" id="SSF47384">
    <property type="entry name" value="Homodimeric domain of signal transducing histidine kinase"/>
    <property type="match status" value="1"/>
</dbReference>
<dbReference type="SUPFAM" id="SSF55785">
    <property type="entry name" value="PYP-like sensor domain (PAS domain)"/>
    <property type="match status" value="1"/>
</dbReference>
<dbReference type="PROSITE" id="PS50109">
    <property type="entry name" value="HIS_KIN"/>
    <property type="match status" value="1"/>
</dbReference>
<dbReference type="PROSITE" id="PS50112">
    <property type="entry name" value="PAS"/>
    <property type="match status" value="1"/>
</dbReference>
<gene>
    <name type="primary">fleS</name>
    <name type="ordered locus">PA1098</name>
</gene>
<organism>
    <name type="scientific">Pseudomonas aeruginosa (strain ATCC 15692 / DSM 22644 / CIP 104116 / JCM 14847 / LMG 12228 / 1C / PRS 101 / PAO1)</name>
    <dbReference type="NCBI Taxonomy" id="208964"/>
    <lineage>
        <taxon>Bacteria</taxon>
        <taxon>Pseudomonadati</taxon>
        <taxon>Pseudomonadota</taxon>
        <taxon>Gammaproteobacteria</taxon>
        <taxon>Pseudomonadales</taxon>
        <taxon>Pseudomonadaceae</taxon>
        <taxon>Pseudomonas</taxon>
    </lineage>
</organism>
<reference key="1">
    <citation type="journal article" date="2000" name="Nature">
        <title>Complete genome sequence of Pseudomonas aeruginosa PAO1, an opportunistic pathogen.</title>
        <authorList>
            <person name="Stover C.K."/>
            <person name="Pham X.-Q.T."/>
            <person name="Erwin A.L."/>
            <person name="Mizoguchi S.D."/>
            <person name="Warrener P."/>
            <person name="Hickey M.J."/>
            <person name="Brinkman F.S.L."/>
            <person name="Hufnagle W.O."/>
            <person name="Kowalik D.J."/>
            <person name="Lagrou M."/>
            <person name="Garber R.L."/>
            <person name="Goltry L."/>
            <person name="Tolentino E."/>
            <person name="Westbrock-Wadman S."/>
            <person name="Yuan Y."/>
            <person name="Brody L.L."/>
            <person name="Coulter S.N."/>
            <person name="Folger K.R."/>
            <person name="Kas A."/>
            <person name="Larbig K."/>
            <person name="Lim R.M."/>
            <person name="Smith K.A."/>
            <person name="Spencer D.H."/>
            <person name="Wong G.K.-S."/>
            <person name="Wu Z."/>
            <person name="Paulsen I.T."/>
            <person name="Reizer J."/>
            <person name="Saier M.H. Jr."/>
            <person name="Hancock R.E.W."/>
            <person name="Lory S."/>
            <person name="Olson M.V."/>
        </authorList>
    </citation>
    <scope>NUCLEOTIDE SEQUENCE [LARGE SCALE GENOMIC DNA]</scope>
    <source>
        <strain>ATCC 15692 / DSM 22644 / CIP 104116 / JCM 14847 / LMG 12228 / 1C / PRS 101 / PAO1</strain>
    </source>
</reference>
<reference key="2">
    <citation type="journal article" date="1995" name="Infect. Immun.">
        <title>Cloning and phenotypic characterization of fleS and fleR, new response regulators of Pseudomonas aeruginosa which regulate motility and adhesion to mucin.</title>
        <authorList>
            <person name="Ritchings B.W."/>
            <person name="Almira E.C."/>
            <person name="Lory S."/>
            <person name="Ramphal R."/>
        </authorList>
    </citation>
    <scope>FUNCTION</scope>
    <scope>DISRUPTION PHENOTYPE</scope>
    <source>
        <strain>PAK</strain>
    </source>
</reference>
<reference key="3">
    <citation type="journal article" date="2019" name="IScience">
        <title>Context-Specific Requirement of Forty-Four Two-Component Loci in Pseudomonas aeruginosa Swarming.</title>
        <authorList>
            <person name="Kollaran A.M."/>
            <person name="Joge S."/>
            <person name="Kotian H.S."/>
            <person name="Badal D."/>
            <person name="Prakash D."/>
            <person name="Mishra A."/>
            <person name="Varma M."/>
            <person name="Singh V."/>
        </authorList>
    </citation>
    <scope>FUNCTION</scope>
</reference>
<name>FLES_PSEAE</name>
<evidence type="ECO:0000250" key="1">
    <source>
        <dbReference type="UniProtKB" id="Q06067"/>
    </source>
</evidence>
<evidence type="ECO:0000255" key="2">
    <source>
        <dbReference type="PROSITE-ProRule" id="PRU00107"/>
    </source>
</evidence>
<evidence type="ECO:0000269" key="3">
    <source>
    </source>
</evidence>
<evidence type="ECO:0000269" key="4">
    <source>
    </source>
</evidence>
<evidence type="ECO:0000303" key="5">
    <source>
    </source>
</evidence>
<evidence type="ECO:0000305" key="6">
    <source>
    </source>
</evidence>
<feature type="chain" id="PRO_0000449420" description="Sensor protein kinase FleS">
    <location>
        <begin position="1"/>
        <end position="402"/>
    </location>
</feature>
<feature type="domain" description="Histidine kinase" evidence="2">
    <location>
        <begin position="188"/>
        <end position="393"/>
    </location>
</feature>
<feature type="modified residue" description="Phosphohistidine; by autocatalysis" evidence="2">
    <location>
        <position position="191"/>
    </location>
</feature>
<comment type="function">
    <text evidence="3 4 6">Member of the two-component regulatory system FleS/FleR that regulates the expression of multiple genes involved in flagellar synthesis, adhesion, swarming, motility and antibiotic resistance (PubMed:30877999, PubMed:7591148). May function as a membrane-associated protein kinase that phosphorylates FleR in response to environmental signals leading to activation of specific gene promoters (Probable).</text>
</comment>
<comment type="catalytic activity">
    <reaction evidence="1">
        <text>ATP + protein L-histidine = ADP + protein N-phospho-L-histidine.</text>
        <dbReference type="EC" id="2.7.13.3"/>
    </reaction>
</comment>
<comment type="disruption phenotype">
    <text evidence="3">Mutant shows severe swimming defect.</text>
</comment>
<protein>
    <recommendedName>
        <fullName evidence="5">Sensor protein kinase FleS</fullName>
        <ecNumber evidence="1">2.7.13.3</ecNumber>
    </recommendedName>
</protein>
<proteinExistence type="inferred from homology"/>